<sequence>MAGRGGAARPNGPAAGNKICQFKLVLLGESAVGKSSLVLRFVKGQFHEYQESTIGAAFLTQTVCLDDTTVKFEIWDTAGQERYHSLAPMYYRGAQAAIVVYDITNTDTFVRAKNWVKELQRQASPNIVIALAGNKADLATKRAVDFQDAQTYADDNSLLFMETSAKTAMNVNEIFMAIAKKLPKNEPQNAPGGPGRNRVVDLQESSQPSRSQCCSN</sequence>
<evidence type="ECO:0000250" key="1">
    <source>
        <dbReference type="UniProtKB" id="P20339"/>
    </source>
</evidence>
<evidence type="ECO:0000256" key="2">
    <source>
        <dbReference type="SAM" id="MobiDB-lite"/>
    </source>
</evidence>
<evidence type="ECO:0000269" key="3">
    <source>
    </source>
</evidence>
<evidence type="ECO:0000305" key="4"/>
<organism>
    <name type="scientific">Gallus gallus</name>
    <name type="common">Chicken</name>
    <dbReference type="NCBI Taxonomy" id="9031"/>
    <lineage>
        <taxon>Eukaryota</taxon>
        <taxon>Metazoa</taxon>
        <taxon>Chordata</taxon>
        <taxon>Craniata</taxon>
        <taxon>Vertebrata</taxon>
        <taxon>Euteleostomi</taxon>
        <taxon>Archelosauria</taxon>
        <taxon>Archosauria</taxon>
        <taxon>Dinosauria</taxon>
        <taxon>Saurischia</taxon>
        <taxon>Theropoda</taxon>
        <taxon>Coelurosauria</taxon>
        <taxon>Aves</taxon>
        <taxon>Neognathae</taxon>
        <taxon>Galloanserae</taxon>
        <taxon>Galliformes</taxon>
        <taxon>Phasianidae</taxon>
        <taxon>Phasianinae</taxon>
        <taxon>Gallus</taxon>
    </lineage>
</organism>
<reference key="1">
    <citation type="journal article" date="1998" name="Biochim. Biophys. Acta">
        <title>Molecular cloning and expression of an avian rab5 homolog.</title>
        <authorList>
            <person name="Bojer C.D.A."/>
            <person name="Wohlrab F."/>
            <person name="Ivessa N.E."/>
        </authorList>
    </citation>
    <scope>NUCLEOTIDE SEQUENCE [MRNA]</scope>
    <scope>TISSUE SPECIFICITY</scope>
    <scope>INDUCTION</scope>
    <source>
        <tissue>Liver</tissue>
    </source>
</reference>
<feature type="chain" id="PRO_0000276769" description="Ras-related protein Rab-5C">
    <location>
        <begin position="1"/>
        <end position="216"/>
    </location>
</feature>
<feature type="region of interest" description="Disordered" evidence="2">
    <location>
        <begin position="184"/>
        <end position="216"/>
    </location>
</feature>
<feature type="short sequence motif" description="Switch 1" evidence="1">
    <location>
        <begin position="45"/>
        <end position="57"/>
    </location>
</feature>
<feature type="short sequence motif" description="Switch 2" evidence="1">
    <location>
        <begin position="78"/>
        <end position="94"/>
    </location>
</feature>
<feature type="compositionally biased region" description="Polar residues" evidence="2">
    <location>
        <begin position="203"/>
        <end position="216"/>
    </location>
</feature>
<feature type="binding site" evidence="1">
    <location>
        <position position="30"/>
    </location>
    <ligand>
        <name>GTP</name>
        <dbReference type="ChEBI" id="CHEBI:37565"/>
    </ligand>
</feature>
<feature type="binding site" evidence="1">
    <location>
        <position position="31"/>
    </location>
    <ligand>
        <name>GTP</name>
        <dbReference type="ChEBI" id="CHEBI:37565"/>
    </ligand>
</feature>
<feature type="binding site" evidence="1">
    <location>
        <position position="33"/>
    </location>
    <ligand>
        <name>GTP</name>
        <dbReference type="ChEBI" id="CHEBI:37565"/>
    </ligand>
</feature>
<feature type="binding site" evidence="1">
    <location>
        <position position="34"/>
    </location>
    <ligand>
        <name>GTP</name>
        <dbReference type="ChEBI" id="CHEBI:37565"/>
    </ligand>
</feature>
<feature type="binding site" evidence="1">
    <location>
        <position position="35"/>
    </location>
    <ligand>
        <name>GTP</name>
        <dbReference type="ChEBI" id="CHEBI:37565"/>
    </ligand>
</feature>
<feature type="binding site" evidence="1">
    <location>
        <position position="35"/>
    </location>
    <ligand>
        <name>Mg(2+)</name>
        <dbReference type="ChEBI" id="CHEBI:18420"/>
    </ligand>
</feature>
<feature type="binding site" evidence="1">
    <location>
        <position position="36"/>
    </location>
    <ligand>
        <name>GTP</name>
        <dbReference type="ChEBI" id="CHEBI:37565"/>
    </ligand>
</feature>
<feature type="binding site" evidence="1">
    <location>
        <position position="47"/>
    </location>
    <ligand>
        <name>GTP</name>
        <dbReference type="ChEBI" id="CHEBI:37565"/>
    </ligand>
</feature>
<feature type="binding site" evidence="1">
    <location>
        <position position="48"/>
    </location>
    <ligand>
        <name>GTP</name>
        <dbReference type="ChEBI" id="CHEBI:37565"/>
    </ligand>
</feature>
<feature type="binding site" evidence="1">
    <location>
        <position position="53"/>
    </location>
    <ligand>
        <name>GTP</name>
        <dbReference type="ChEBI" id="CHEBI:37565"/>
    </ligand>
</feature>
<feature type="binding site" evidence="1">
    <location>
        <position position="53"/>
    </location>
    <ligand>
        <name>Mg(2+)</name>
        <dbReference type="ChEBI" id="CHEBI:18420"/>
    </ligand>
</feature>
<feature type="binding site" evidence="1">
    <location>
        <position position="79"/>
    </location>
    <ligand>
        <name>GTP</name>
        <dbReference type="ChEBI" id="CHEBI:37565"/>
    </ligand>
</feature>
<feature type="binding site" evidence="1">
    <location>
        <position position="134"/>
    </location>
    <ligand>
        <name>GTP</name>
        <dbReference type="ChEBI" id="CHEBI:37565"/>
    </ligand>
</feature>
<feature type="binding site" evidence="1">
    <location>
        <position position="135"/>
    </location>
    <ligand>
        <name>GTP</name>
        <dbReference type="ChEBI" id="CHEBI:37565"/>
    </ligand>
</feature>
<feature type="binding site" evidence="1">
    <location>
        <position position="137"/>
    </location>
    <ligand>
        <name>GTP</name>
        <dbReference type="ChEBI" id="CHEBI:37565"/>
    </ligand>
</feature>
<feature type="binding site" evidence="1">
    <location>
        <position position="165"/>
    </location>
    <ligand>
        <name>GTP</name>
        <dbReference type="ChEBI" id="CHEBI:37565"/>
    </ligand>
</feature>
<feature type="binding site" evidence="1">
    <location>
        <position position="166"/>
    </location>
    <ligand>
        <name>GTP</name>
        <dbReference type="ChEBI" id="CHEBI:37565"/>
    </ligand>
</feature>
<feature type="lipid moiety-binding region" description="S-geranylgeranyl cysteine" evidence="1">
    <location>
        <position position="213"/>
    </location>
</feature>
<feature type="lipid moiety-binding region" description="S-geranylgeranyl cysteine" evidence="1">
    <location>
        <position position="214"/>
    </location>
</feature>
<keyword id="KW-1003">Cell membrane</keyword>
<keyword id="KW-0967">Endosome</keyword>
<keyword id="KW-0342">GTP-binding</keyword>
<keyword id="KW-0378">Hydrolase</keyword>
<keyword id="KW-0449">Lipoprotein</keyword>
<keyword id="KW-0460">Magnesium</keyword>
<keyword id="KW-0472">Membrane</keyword>
<keyword id="KW-0479">Metal-binding</keyword>
<keyword id="KW-0547">Nucleotide-binding</keyword>
<keyword id="KW-0636">Prenylation</keyword>
<keyword id="KW-0653">Protein transport</keyword>
<keyword id="KW-1185">Reference proteome</keyword>
<keyword id="KW-0813">Transport</keyword>
<name>RAB5C_CHICK</name>
<dbReference type="EC" id="3.6.5.2" evidence="1"/>
<dbReference type="EMBL" id="Y07811">
    <property type="protein sequence ID" value="CAA69142.1"/>
    <property type="molecule type" value="mRNA"/>
</dbReference>
<dbReference type="RefSeq" id="NP_989856.1">
    <property type="nucleotide sequence ID" value="NM_204525.1"/>
</dbReference>
<dbReference type="RefSeq" id="XP_015155054.1">
    <property type="nucleotide sequence ID" value="XM_015299568.4"/>
</dbReference>
<dbReference type="RefSeq" id="XP_046789163.1">
    <property type="nucleotide sequence ID" value="XM_046933207.1"/>
</dbReference>
<dbReference type="SMR" id="Q98932"/>
<dbReference type="FunCoup" id="Q98932">
    <property type="interactions" value="3349"/>
</dbReference>
<dbReference type="STRING" id="9031.ENSGALP00000005302"/>
<dbReference type="PaxDb" id="9031-ENSGALP00000005302"/>
<dbReference type="Ensembl" id="ENSGALT00010056730.1">
    <property type="protein sequence ID" value="ENSGALP00010034472.1"/>
    <property type="gene ID" value="ENSGALG00010023265.1"/>
</dbReference>
<dbReference type="GeneID" id="395197"/>
<dbReference type="KEGG" id="gga:395197"/>
<dbReference type="CTD" id="5878"/>
<dbReference type="VEuPathDB" id="HostDB:geneid_395197"/>
<dbReference type="eggNOG" id="KOG0092">
    <property type="taxonomic scope" value="Eukaryota"/>
</dbReference>
<dbReference type="GeneTree" id="ENSGT00940000154971"/>
<dbReference type="HOGENOM" id="CLU_041217_10_2_1"/>
<dbReference type="InParanoid" id="Q98932"/>
<dbReference type="OMA" id="GGPNKTC"/>
<dbReference type="OrthoDB" id="63533at2759"/>
<dbReference type="PhylomeDB" id="Q98932"/>
<dbReference type="Reactome" id="R-GGA-432722">
    <property type="pathway name" value="Golgi Associated Vesicle Biogenesis"/>
</dbReference>
<dbReference type="Reactome" id="R-GGA-6798695">
    <property type="pathway name" value="Neutrophil degranulation"/>
</dbReference>
<dbReference type="Reactome" id="R-GGA-8854214">
    <property type="pathway name" value="TBC/RABGAPs"/>
</dbReference>
<dbReference type="Reactome" id="R-GGA-8856828">
    <property type="pathway name" value="Clathrin-mediated endocytosis"/>
</dbReference>
<dbReference type="Reactome" id="R-GGA-8876198">
    <property type="pathway name" value="RAB GEFs exchange GTP for GDP on RABs"/>
</dbReference>
<dbReference type="PRO" id="PR:Q98932"/>
<dbReference type="Proteomes" id="UP000000539">
    <property type="component" value="Chromosome 27"/>
</dbReference>
<dbReference type="Bgee" id="ENSGALG00000003359">
    <property type="expression patterns" value="Expressed in lung and 13 other cell types or tissues"/>
</dbReference>
<dbReference type="GO" id="GO:0005769">
    <property type="term" value="C:early endosome"/>
    <property type="evidence" value="ECO:0000318"/>
    <property type="project" value="GO_Central"/>
</dbReference>
<dbReference type="GO" id="GO:0031901">
    <property type="term" value="C:early endosome membrane"/>
    <property type="evidence" value="ECO:0007669"/>
    <property type="project" value="UniProtKB-SubCell"/>
</dbReference>
<dbReference type="GO" id="GO:0030139">
    <property type="term" value="C:endocytic vesicle"/>
    <property type="evidence" value="ECO:0000318"/>
    <property type="project" value="GO_Central"/>
</dbReference>
<dbReference type="GO" id="GO:0012505">
    <property type="term" value="C:endomembrane system"/>
    <property type="evidence" value="ECO:0000318"/>
    <property type="project" value="GO_Central"/>
</dbReference>
<dbReference type="GO" id="GO:0005811">
    <property type="term" value="C:lipid droplet"/>
    <property type="evidence" value="ECO:0007669"/>
    <property type="project" value="Ensembl"/>
</dbReference>
<dbReference type="GO" id="GO:0005886">
    <property type="term" value="C:plasma membrane"/>
    <property type="evidence" value="ECO:0000318"/>
    <property type="project" value="GO_Central"/>
</dbReference>
<dbReference type="GO" id="GO:0003925">
    <property type="term" value="F:G protein activity"/>
    <property type="evidence" value="ECO:0007669"/>
    <property type="project" value="UniProtKB-EC"/>
</dbReference>
<dbReference type="GO" id="GO:0019003">
    <property type="term" value="F:GDP binding"/>
    <property type="evidence" value="ECO:0000250"/>
    <property type="project" value="UniProtKB"/>
</dbReference>
<dbReference type="GO" id="GO:0005525">
    <property type="term" value="F:GTP binding"/>
    <property type="evidence" value="ECO:0007669"/>
    <property type="project" value="UniProtKB-KW"/>
</dbReference>
<dbReference type="GO" id="GO:0003924">
    <property type="term" value="F:GTPase activity"/>
    <property type="evidence" value="ECO:0000318"/>
    <property type="project" value="GO_Central"/>
</dbReference>
<dbReference type="GO" id="GO:0006897">
    <property type="term" value="P:endocytosis"/>
    <property type="evidence" value="ECO:0000318"/>
    <property type="project" value="GO_Central"/>
</dbReference>
<dbReference type="GO" id="GO:0007032">
    <property type="term" value="P:endosome organization"/>
    <property type="evidence" value="ECO:0007669"/>
    <property type="project" value="Ensembl"/>
</dbReference>
<dbReference type="GO" id="GO:0006886">
    <property type="term" value="P:intracellular protein transport"/>
    <property type="evidence" value="ECO:0000318"/>
    <property type="project" value="GO_Central"/>
</dbReference>
<dbReference type="GO" id="GO:0048227">
    <property type="term" value="P:plasma membrane to endosome transport"/>
    <property type="evidence" value="ECO:0007669"/>
    <property type="project" value="Ensembl"/>
</dbReference>
<dbReference type="GO" id="GO:0030100">
    <property type="term" value="P:regulation of endocytosis"/>
    <property type="evidence" value="ECO:0007669"/>
    <property type="project" value="Ensembl"/>
</dbReference>
<dbReference type="CDD" id="cd01860">
    <property type="entry name" value="Rab5_related"/>
    <property type="match status" value="1"/>
</dbReference>
<dbReference type="FunFam" id="3.40.50.300:FF:000180">
    <property type="entry name" value="Member RAS oncogene family"/>
    <property type="match status" value="1"/>
</dbReference>
<dbReference type="Gene3D" id="3.40.50.300">
    <property type="entry name" value="P-loop containing nucleotide triphosphate hydrolases"/>
    <property type="match status" value="1"/>
</dbReference>
<dbReference type="InterPro" id="IPR027417">
    <property type="entry name" value="P-loop_NTPase"/>
</dbReference>
<dbReference type="InterPro" id="IPR005225">
    <property type="entry name" value="Small_GTP-bd"/>
</dbReference>
<dbReference type="InterPro" id="IPR001806">
    <property type="entry name" value="Small_GTPase"/>
</dbReference>
<dbReference type="NCBIfam" id="TIGR00231">
    <property type="entry name" value="small_GTP"/>
    <property type="match status" value="1"/>
</dbReference>
<dbReference type="PANTHER" id="PTHR47978">
    <property type="match status" value="1"/>
</dbReference>
<dbReference type="Pfam" id="PF00071">
    <property type="entry name" value="Ras"/>
    <property type="match status" value="1"/>
</dbReference>
<dbReference type="PRINTS" id="PR00449">
    <property type="entry name" value="RASTRNSFRMNG"/>
</dbReference>
<dbReference type="SMART" id="SM00175">
    <property type="entry name" value="RAB"/>
    <property type="match status" value="1"/>
</dbReference>
<dbReference type="SMART" id="SM00176">
    <property type="entry name" value="RAN"/>
    <property type="match status" value="1"/>
</dbReference>
<dbReference type="SMART" id="SM00173">
    <property type="entry name" value="RAS"/>
    <property type="match status" value="1"/>
</dbReference>
<dbReference type="SMART" id="SM00174">
    <property type="entry name" value="RHO"/>
    <property type="match status" value="1"/>
</dbReference>
<dbReference type="SUPFAM" id="SSF52540">
    <property type="entry name" value="P-loop containing nucleoside triphosphate hydrolases"/>
    <property type="match status" value="1"/>
</dbReference>
<dbReference type="PROSITE" id="PS51419">
    <property type="entry name" value="RAB"/>
    <property type="match status" value="1"/>
</dbReference>
<gene>
    <name type="primary">RAB5C</name>
</gene>
<comment type="function">
    <text evidence="1">The small GTPases Rab are key regulators of intracellular membrane trafficking, from the formation of transport vesicles to their fusion with membranes. Rabs cycle between an inactive GDP-bound form and an active GTP-bound form that is able to recruit to membranes different sets of downstream effectors directly responsible for vesicle formation, movement, tethering and fusion.</text>
</comment>
<comment type="catalytic activity">
    <reaction evidence="1">
        <text>GTP + H2O = GDP + phosphate + H(+)</text>
        <dbReference type="Rhea" id="RHEA:19669"/>
        <dbReference type="ChEBI" id="CHEBI:15377"/>
        <dbReference type="ChEBI" id="CHEBI:15378"/>
        <dbReference type="ChEBI" id="CHEBI:37565"/>
        <dbReference type="ChEBI" id="CHEBI:43474"/>
        <dbReference type="ChEBI" id="CHEBI:58189"/>
        <dbReference type="EC" id="3.6.5.2"/>
    </reaction>
    <physiologicalReaction direction="left-to-right" evidence="1">
        <dbReference type="Rhea" id="RHEA:19670"/>
    </physiologicalReaction>
</comment>
<comment type="cofactor">
    <cofactor evidence="1">
        <name>Mg(2+)</name>
        <dbReference type="ChEBI" id="CHEBI:18420"/>
    </cofactor>
</comment>
<comment type="activity regulation">
    <text evidence="4">Regulated by guanine nucleotide exchange factors (GEFs) which promote the exchange of bound GDP for free GTP (Probable). Regulated by GTPase activating proteins (GAPs) which increase the GTP hydrolysis activity (Probable). Inhibited by GDP dissociation inhibitors (GDIs) (Probable).</text>
</comment>
<comment type="subcellular location">
    <subcellularLocation>
        <location evidence="1">Cell membrane</location>
        <topology evidence="1">Lipid-anchor</topology>
        <orientation evidence="1">Cytoplasmic side</orientation>
    </subcellularLocation>
    <subcellularLocation>
        <location evidence="1">Early endosome membrane</location>
        <topology evidence="1">Lipid-anchor</topology>
    </subcellularLocation>
</comment>
<comment type="tissue specificity">
    <text evidence="3">Detected in brain, ovary, rectum, small intestine, large intestine, liver, spleen, follicle and kidney (at protein level).</text>
</comment>
<comment type="domain">
    <text evidence="1">Switch 1, switch 2 and the interswitch regions are characteristic of Rab GTPases and mediate the interactions with Rab downstream effectors. The switch regions undergo conformational changes upon nucleotide binding which drive interaction with specific sets of effector proteins, with most effectors only binding to GTP-bound Rab.</text>
</comment>
<comment type="similarity">
    <text evidence="4">Belongs to the small GTPase superfamily. Rab family.</text>
</comment>
<proteinExistence type="evidence at protein level"/>
<protein>
    <recommendedName>
        <fullName>Ras-related protein Rab-5C</fullName>
        <ecNumber evidence="1">3.6.5.2</ecNumber>
    </recommendedName>
    <alternativeName>
        <fullName>Rab5C-like protein</fullName>
    </alternativeName>
</protein>
<accession>Q98932</accession>